<accession>C1E9T6</accession>
<comment type="function">
    <text evidence="1">Allows the formation of correctly charged Gln-tRNA(Gln) through the transamidation of misacylated Glu-tRNA(Gln) in chloroplasts and mitochondria. The reaction takes place in the presence of glutamine and ATP through an activated gamma-phospho-Glu-tRNA(Gln).</text>
</comment>
<comment type="catalytic activity">
    <reaction evidence="1">
        <text>L-glutamyl-tRNA(Gln) + L-glutamine + ATP + H2O = L-glutaminyl-tRNA(Gln) + L-glutamate + ADP + phosphate + H(+)</text>
        <dbReference type="Rhea" id="RHEA:17521"/>
        <dbReference type="Rhea" id="RHEA-COMP:9681"/>
        <dbReference type="Rhea" id="RHEA-COMP:9684"/>
        <dbReference type="ChEBI" id="CHEBI:15377"/>
        <dbReference type="ChEBI" id="CHEBI:15378"/>
        <dbReference type="ChEBI" id="CHEBI:29985"/>
        <dbReference type="ChEBI" id="CHEBI:30616"/>
        <dbReference type="ChEBI" id="CHEBI:43474"/>
        <dbReference type="ChEBI" id="CHEBI:58359"/>
        <dbReference type="ChEBI" id="CHEBI:78520"/>
        <dbReference type="ChEBI" id="CHEBI:78521"/>
        <dbReference type="ChEBI" id="CHEBI:456216"/>
    </reaction>
</comment>
<comment type="subunit">
    <text evidence="1">Subunit of the heterotrimeric GatCAB amidotransferase (AdT) complex, composed of A, B and C subunits.</text>
</comment>
<comment type="subcellular location">
    <subcellularLocation>
        <location evidence="1">Mitochondrion</location>
    </subcellularLocation>
    <subcellularLocation>
        <location evidence="1">Plastid</location>
        <location evidence="1">Chloroplast</location>
    </subcellularLocation>
</comment>
<comment type="miscellaneous">
    <text evidence="1">This protein may be expected to contain an N-terminal transit peptide but none has been predicted.</text>
</comment>
<comment type="similarity">
    <text evidence="1">Belongs to the GatB/GatE family. GatB subfamily.</text>
</comment>
<organism>
    <name type="scientific">Micromonas commoda (strain RCC299 / NOUM17 / CCMP2709)</name>
    <name type="common">Picoplanktonic green alga</name>
    <dbReference type="NCBI Taxonomy" id="296587"/>
    <lineage>
        <taxon>Eukaryota</taxon>
        <taxon>Viridiplantae</taxon>
        <taxon>Chlorophyta</taxon>
        <taxon>Mamiellophyceae</taxon>
        <taxon>Mamiellales</taxon>
        <taxon>Mamiellaceae</taxon>
        <taxon>Micromonas</taxon>
    </lineage>
</organism>
<gene>
    <name evidence="1" type="primary">GATB-1</name>
    <name type="ORF">MICPUN_83264</name>
</gene>
<proteinExistence type="inferred from homology"/>
<sequence>MIRAGGPSPSPRGRRAGPIRLPRRAPSSTPTRAKTEEKASADASSRTGADAEVQFEAVIGIETHVQLNCRTKAFCRCAAVYGDEPNTHCCPTCMGYPGTYPVLSEAVVRKAVQLGLGLNARVRRRSKFDRKQYFYPDLPKGYQISQFDEPIAEGGYIDVVIPVEDGGGVRRIGITRAHVEEDAGKLTHYPAKGDTPGYALADYNRAGVALVEIVSEPDMRTGREVAAYGAELRRLVRYLDVGDGNLSEGSMRCDVNVSVRPVGREAFGTKVEVKNMNSFNAMSRAIDFEIDRQTALIRAGKGDEIVQETRTWDEGRQCTVSMRKKEGLADYRYFPEPDLPPLVFDEAFVEKCASAMPELPGAIRARYADLGLPPADVQVLVEDKELVEYFDAALAAGAPAKQCANWLTGDVMAWLKNAKDVAVSSMPLSATQLAEFCTLIEDGVISGKIGKDILPDLLEGKEGNKSVGDIVEERGLKQISDPKEIEAIVDRVLEANPGQLEQYRGGKDKLKGFFVGAVLRESGGRANPALSNEILMRKLNEGR</sequence>
<reference key="1">
    <citation type="journal article" date="2009" name="Science">
        <title>Green evolution and dynamic adaptations revealed by genomes of the marine picoeukaryotes Micromonas.</title>
        <authorList>
            <person name="Worden A.Z."/>
            <person name="Lee J.H."/>
            <person name="Mock T."/>
            <person name="Rouze P."/>
            <person name="Simmons M.P."/>
            <person name="Aerts A.L."/>
            <person name="Allen A.E."/>
            <person name="Cuvelier M.L."/>
            <person name="Derelle E."/>
            <person name="Everett M.V."/>
            <person name="Foulon E."/>
            <person name="Grimwood J."/>
            <person name="Gundlach H."/>
            <person name="Henrissat B."/>
            <person name="Napoli C."/>
            <person name="McDonald S.M."/>
            <person name="Parker M.S."/>
            <person name="Rombauts S."/>
            <person name="Salamov A."/>
            <person name="Von Dassow P."/>
            <person name="Badger J.H."/>
            <person name="Coutinho P.M."/>
            <person name="Demir E."/>
            <person name="Dubchak I."/>
            <person name="Gentemann C."/>
            <person name="Eikrem W."/>
            <person name="Gready J.E."/>
            <person name="John U."/>
            <person name="Lanier W."/>
            <person name="Lindquist E.A."/>
            <person name="Lucas S."/>
            <person name="Mayer K.F."/>
            <person name="Moreau H."/>
            <person name="Not F."/>
            <person name="Otillar R."/>
            <person name="Panaud O."/>
            <person name="Pangilinan J."/>
            <person name="Paulsen I."/>
            <person name="Piegu B."/>
            <person name="Poliakov A."/>
            <person name="Robbens S."/>
            <person name="Schmutz J."/>
            <person name="Toulza E."/>
            <person name="Wyss T."/>
            <person name="Zelensky A."/>
            <person name="Zhou K."/>
            <person name="Armbrust E.V."/>
            <person name="Bhattacharya D."/>
            <person name="Goodenough U.W."/>
            <person name="Van de Peer Y."/>
            <person name="Grigoriev I.V."/>
        </authorList>
    </citation>
    <scope>NUCLEOTIDE SEQUENCE [LARGE SCALE GENOMIC DNA]</scope>
    <source>
        <strain>RCC299 / NOUM17</strain>
    </source>
</reference>
<protein>
    <recommendedName>
        <fullName>Glutamyl-tRNA(Gln) amidotransferase subunit B-1, chloroplastic/mitochondrial</fullName>
        <shortName evidence="1">Glu-AdT subunit B-1</shortName>
        <ecNumber evidence="1">6.3.5.-</ecNumber>
    </recommendedName>
</protein>
<keyword id="KW-0067">ATP-binding</keyword>
<keyword id="KW-0150">Chloroplast</keyword>
<keyword id="KW-0436">Ligase</keyword>
<keyword id="KW-0496">Mitochondrion</keyword>
<keyword id="KW-0547">Nucleotide-binding</keyword>
<keyword id="KW-0934">Plastid</keyword>
<keyword id="KW-0648">Protein biosynthesis</keyword>
<keyword id="KW-1185">Reference proteome</keyword>
<dbReference type="EC" id="6.3.5.-" evidence="1"/>
<dbReference type="EMBL" id="CP001328">
    <property type="protein sequence ID" value="ACO64734.1"/>
    <property type="molecule type" value="Genomic_DNA"/>
</dbReference>
<dbReference type="RefSeq" id="XP_002503476.1">
    <property type="nucleotide sequence ID" value="XM_002503430.1"/>
</dbReference>
<dbReference type="SMR" id="C1E9T6"/>
<dbReference type="FunCoup" id="C1E9T6">
    <property type="interactions" value="1531"/>
</dbReference>
<dbReference type="STRING" id="296587.C1E9T6"/>
<dbReference type="GeneID" id="8245125"/>
<dbReference type="KEGG" id="mis:MICPUN_83264"/>
<dbReference type="eggNOG" id="KOG2438">
    <property type="taxonomic scope" value="Eukaryota"/>
</dbReference>
<dbReference type="InParanoid" id="C1E9T6"/>
<dbReference type="OMA" id="ARKWWMG"/>
<dbReference type="OrthoDB" id="1722066at2759"/>
<dbReference type="Proteomes" id="UP000002009">
    <property type="component" value="Chromosome 7"/>
</dbReference>
<dbReference type="GO" id="GO:0009507">
    <property type="term" value="C:chloroplast"/>
    <property type="evidence" value="ECO:0007669"/>
    <property type="project" value="UniProtKB-SubCell"/>
</dbReference>
<dbReference type="GO" id="GO:0030956">
    <property type="term" value="C:glutamyl-tRNA(Gln) amidotransferase complex"/>
    <property type="evidence" value="ECO:0007669"/>
    <property type="project" value="UniProtKB-UniRule"/>
</dbReference>
<dbReference type="GO" id="GO:0005739">
    <property type="term" value="C:mitochondrion"/>
    <property type="evidence" value="ECO:0007669"/>
    <property type="project" value="UniProtKB-SubCell"/>
</dbReference>
<dbReference type="GO" id="GO:0005524">
    <property type="term" value="F:ATP binding"/>
    <property type="evidence" value="ECO:0007669"/>
    <property type="project" value="UniProtKB-KW"/>
</dbReference>
<dbReference type="GO" id="GO:0050567">
    <property type="term" value="F:glutaminyl-tRNA synthase (glutamine-hydrolyzing) activity"/>
    <property type="evidence" value="ECO:0007669"/>
    <property type="project" value="UniProtKB-UniRule"/>
</dbReference>
<dbReference type="GO" id="GO:0070681">
    <property type="term" value="P:glutaminyl-tRNAGln biosynthesis via transamidation"/>
    <property type="evidence" value="ECO:0007669"/>
    <property type="project" value="UniProtKB-UniRule"/>
</dbReference>
<dbReference type="GO" id="GO:0032543">
    <property type="term" value="P:mitochondrial translation"/>
    <property type="evidence" value="ECO:0007669"/>
    <property type="project" value="UniProtKB-UniRule"/>
</dbReference>
<dbReference type="FunFam" id="1.10.10.410:FF:000001">
    <property type="entry name" value="Aspartyl/glutamyl-tRNA(Asn/Gln) amidotransferase subunit B"/>
    <property type="match status" value="1"/>
</dbReference>
<dbReference type="Gene3D" id="1.10.10.410">
    <property type="match status" value="1"/>
</dbReference>
<dbReference type="HAMAP" id="MF_00121">
    <property type="entry name" value="GatB"/>
    <property type="match status" value="1"/>
</dbReference>
<dbReference type="InterPro" id="IPR017959">
    <property type="entry name" value="Asn/Gln-tRNA_amidoTrfase_suB/E"/>
</dbReference>
<dbReference type="InterPro" id="IPR006075">
    <property type="entry name" value="Asn/Gln-tRNA_Trfase_suB/E_cat"/>
</dbReference>
<dbReference type="InterPro" id="IPR018027">
    <property type="entry name" value="Asn/Gln_amidotransferase"/>
</dbReference>
<dbReference type="InterPro" id="IPR003789">
    <property type="entry name" value="Asn/Gln_tRNA_amidoTrase-B-like"/>
</dbReference>
<dbReference type="InterPro" id="IPR004413">
    <property type="entry name" value="GatB"/>
</dbReference>
<dbReference type="InterPro" id="IPR023168">
    <property type="entry name" value="GatB_Yqey_C_2"/>
</dbReference>
<dbReference type="InterPro" id="IPR017958">
    <property type="entry name" value="Gln-tRNA_amidoTrfase_suB_CS"/>
</dbReference>
<dbReference type="InterPro" id="IPR014746">
    <property type="entry name" value="Gln_synth/guanido_kin_cat_dom"/>
</dbReference>
<dbReference type="NCBIfam" id="TIGR00133">
    <property type="entry name" value="gatB"/>
    <property type="match status" value="1"/>
</dbReference>
<dbReference type="NCBIfam" id="NF004012">
    <property type="entry name" value="PRK05477.1-2"/>
    <property type="match status" value="1"/>
</dbReference>
<dbReference type="NCBIfam" id="NF004014">
    <property type="entry name" value="PRK05477.1-4"/>
    <property type="match status" value="1"/>
</dbReference>
<dbReference type="PANTHER" id="PTHR11659">
    <property type="entry name" value="GLUTAMYL-TRNA GLN AMIDOTRANSFERASE SUBUNIT B MITOCHONDRIAL AND PROKARYOTIC PET112-RELATED"/>
    <property type="match status" value="1"/>
</dbReference>
<dbReference type="PANTHER" id="PTHR11659:SF0">
    <property type="entry name" value="GLUTAMYL-TRNA(GLN) AMIDOTRANSFERASE SUBUNIT B, MITOCHONDRIAL"/>
    <property type="match status" value="1"/>
</dbReference>
<dbReference type="Pfam" id="PF02934">
    <property type="entry name" value="GatB_N"/>
    <property type="match status" value="1"/>
</dbReference>
<dbReference type="Pfam" id="PF02637">
    <property type="entry name" value="GatB_Yqey"/>
    <property type="match status" value="1"/>
</dbReference>
<dbReference type="SMART" id="SM00845">
    <property type="entry name" value="GatB_Yqey"/>
    <property type="match status" value="1"/>
</dbReference>
<dbReference type="SUPFAM" id="SSF89095">
    <property type="entry name" value="GatB/YqeY motif"/>
    <property type="match status" value="1"/>
</dbReference>
<dbReference type="SUPFAM" id="SSF55931">
    <property type="entry name" value="Glutamine synthetase/guanido kinase"/>
    <property type="match status" value="1"/>
</dbReference>
<dbReference type="PROSITE" id="PS01234">
    <property type="entry name" value="GATB"/>
    <property type="match status" value="1"/>
</dbReference>
<name>GATB1_MICCC</name>
<evidence type="ECO:0000255" key="1">
    <source>
        <dbReference type="HAMAP-Rule" id="MF_03147"/>
    </source>
</evidence>
<evidence type="ECO:0000256" key="2">
    <source>
        <dbReference type="SAM" id="MobiDB-lite"/>
    </source>
</evidence>
<feature type="chain" id="PRO_0000413227" description="Glutamyl-tRNA(Gln) amidotransferase subunit B-1, chloroplastic/mitochondrial">
    <location>
        <begin position="1"/>
        <end position="543"/>
    </location>
</feature>
<feature type="region of interest" description="Disordered" evidence="2">
    <location>
        <begin position="1"/>
        <end position="47"/>
    </location>
</feature>
<feature type="compositionally biased region" description="Basic residues" evidence="2">
    <location>
        <begin position="12"/>
        <end position="23"/>
    </location>
</feature>